<name>PUR7_TRIEI</name>
<protein>
    <recommendedName>
        <fullName evidence="1">Phosphoribosylaminoimidazole-succinocarboxamide synthase</fullName>
        <ecNumber evidence="1">6.3.2.6</ecNumber>
    </recommendedName>
    <alternativeName>
        <fullName evidence="1">SAICAR synthetase</fullName>
    </alternativeName>
</protein>
<sequence length="242" mass="27935">MSSHQKLYEGKAKILYTTDDPEILLTYFKDDATAFNAQKKGTITGKGKINCTISSHIFKLLETNEIPTHFIDCPASDKMRVRRVKILPIEVIVRNIAAGSLCRQTLLTEGTILKFPLVEYCYKNDTLQDPLLTRDRLLILELATPEQLEQIRTFAVKINDILINFFNQCQITLVDFKIEFGLDKHENLILADEISPDSCRLWDQYQTDPNQRVMDKDRFRRDLGKVETGYQQVLERILAHQG</sequence>
<evidence type="ECO:0000255" key="1">
    <source>
        <dbReference type="HAMAP-Rule" id="MF_00137"/>
    </source>
</evidence>
<reference key="1">
    <citation type="journal article" date="2015" name="Proc. Natl. Acad. Sci. U.S.A.">
        <title>Trichodesmium genome maintains abundant, widespread noncoding DNA in situ, despite oligotrophic lifestyle.</title>
        <authorList>
            <person name="Walworth N."/>
            <person name="Pfreundt U."/>
            <person name="Nelson W.C."/>
            <person name="Mincer T."/>
            <person name="Heidelberg J.F."/>
            <person name="Fu F."/>
            <person name="Waterbury J.B."/>
            <person name="Glavina del Rio T."/>
            <person name="Goodwin L."/>
            <person name="Kyrpides N.C."/>
            <person name="Land M.L."/>
            <person name="Woyke T."/>
            <person name="Hutchins D.A."/>
            <person name="Hess W.R."/>
            <person name="Webb E.A."/>
        </authorList>
    </citation>
    <scope>NUCLEOTIDE SEQUENCE [LARGE SCALE GENOMIC DNA]</scope>
    <source>
        <strain>IMS101</strain>
    </source>
</reference>
<feature type="chain" id="PRO_1000018807" description="Phosphoribosylaminoimidazole-succinocarboxamide synthase">
    <location>
        <begin position="1"/>
        <end position="242"/>
    </location>
</feature>
<gene>
    <name evidence="1" type="primary">purC</name>
    <name type="ordered locus">Tery_4655</name>
</gene>
<proteinExistence type="inferred from homology"/>
<dbReference type="EC" id="6.3.2.6" evidence="1"/>
<dbReference type="EMBL" id="CP000393">
    <property type="protein sequence ID" value="ABG53624.1"/>
    <property type="molecule type" value="Genomic_DNA"/>
</dbReference>
<dbReference type="RefSeq" id="WP_011613941.1">
    <property type="nucleotide sequence ID" value="NC_008312.1"/>
</dbReference>
<dbReference type="SMR" id="Q10VV0"/>
<dbReference type="STRING" id="203124.Tery_4655"/>
<dbReference type="KEGG" id="ter:Tery_4655"/>
<dbReference type="eggNOG" id="COG0152">
    <property type="taxonomic scope" value="Bacteria"/>
</dbReference>
<dbReference type="HOGENOM" id="CLU_061495_2_0_3"/>
<dbReference type="OrthoDB" id="9801549at2"/>
<dbReference type="UniPathway" id="UPA00074">
    <property type="reaction ID" value="UER00131"/>
</dbReference>
<dbReference type="GO" id="GO:0005524">
    <property type="term" value="F:ATP binding"/>
    <property type="evidence" value="ECO:0007669"/>
    <property type="project" value="UniProtKB-KW"/>
</dbReference>
<dbReference type="GO" id="GO:0004639">
    <property type="term" value="F:phosphoribosylaminoimidazolesuccinocarboxamide synthase activity"/>
    <property type="evidence" value="ECO:0007669"/>
    <property type="project" value="UniProtKB-UniRule"/>
</dbReference>
<dbReference type="GO" id="GO:0006189">
    <property type="term" value="P:'de novo' IMP biosynthetic process"/>
    <property type="evidence" value="ECO:0007669"/>
    <property type="project" value="UniProtKB-UniRule"/>
</dbReference>
<dbReference type="GO" id="GO:0009236">
    <property type="term" value="P:cobalamin biosynthetic process"/>
    <property type="evidence" value="ECO:0007669"/>
    <property type="project" value="InterPro"/>
</dbReference>
<dbReference type="CDD" id="cd01415">
    <property type="entry name" value="SAICAR_synt_PurC"/>
    <property type="match status" value="1"/>
</dbReference>
<dbReference type="FunFam" id="3.30.470.20:FF:000006">
    <property type="entry name" value="Phosphoribosylaminoimidazole-succinocarboxamide synthase"/>
    <property type="match status" value="1"/>
</dbReference>
<dbReference type="Gene3D" id="3.30.470.20">
    <property type="entry name" value="ATP-grasp fold, B domain"/>
    <property type="match status" value="1"/>
</dbReference>
<dbReference type="Gene3D" id="3.30.200.20">
    <property type="entry name" value="Phosphorylase Kinase, domain 1"/>
    <property type="match status" value="1"/>
</dbReference>
<dbReference type="HAMAP" id="MF_00137">
    <property type="entry name" value="SAICAR_synth"/>
    <property type="match status" value="1"/>
</dbReference>
<dbReference type="InterPro" id="IPR028923">
    <property type="entry name" value="SAICAR_synt/ADE2_N"/>
</dbReference>
<dbReference type="InterPro" id="IPR033934">
    <property type="entry name" value="SAICAR_synt_PurC"/>
</dbReference>
<dbReference type="InterPro" id="IPR001636">
    <property type="entry name" value="SAICAR_synth"/>
</dbReference>
<dbReference type="InterPro" id="IPR050089">
    <property type="entry name" value="SAICAR_synthetase"/>
</dbReference>
<dbReference type="InterPro" id="IPR018236">
    <property type="entry name" value="SAICAR_synthetase_CS"/>
</dbReference>
<dbReference type="NCBIfam" id="TIGR00081">
    <property type="entry name" value="purC"/>
    <property type="match status" value="1"/>
</dbReference>
<dbReference type="PANTHER" id="PTHR43599">
    <property type="entry name" value="MULTIFUNCTIONAL PROTEIN ADE2"/>
    <property type="match status" value="1"/>
</dbReference>
<dbReference type="PANTHER" id="PTHR43599:SF3">
    <property type="entry name" value="SI:DKEY-6E2.2"/>
    <property type="match status" value="1"/>
</dbReference>
<dbReference type="Pfam" id="PF01259">
    <property type="entry name" value="SAICAR_synt"/>
    <property type="match status" value="1"/>
</dbReference>
<dbReference type="SUPFAM" id="SSF56104">
    <property type="entry name" value="SAICAR synthase-like"/>
    <property type="match status" value="1"/>
</dbReference>
<dbReference type="PROSITE" id="PS01057">
    <property type="entry name" value="SAICAR_SYNTHETASE_1"/>
    <property type="match status" value="1"/>
</dbReference>
<dbReference type="PROSITE" id="PS01058">
    <property type="entry name" value="SAICAR_SYNTHETASE_2"/>
    <property type="match status" value="1"/>
</dbReference>
<keyword id="KW-0067">ATP-binding</keyword>
<keyword id="KW-0436">Ligase</keyword>
<keyword id="KW-0547">Nucleotide-binding</keyword>
<keyword id="KW-0658">Purine biosynthesis</keyword>
<accession>Q10VV0</accession>
<comment type="catalytic activity">
    <reaction evidence="1">
        <text>5-amino-1-(5-phospho-D-ribosyl)imidazole-4-carboxylate + L-aspartate + ATP = (2S)-2-[5-amino-1-(5-phospho-beta-D-ribosyl)imidazole-4-carboxamido]succinate + ADP + phosphate + 2 H(+)</text>
        <dbReference type="Rhea" id="RHEA:22628"/>
        <dbReference type="ChEBI" id="CHEBI:15378"/>
        <dbReference type="ChEBI" id="CHEBI:29991"/>
        <dbReference type="ChEBI" id="CHEBI:30616"/>
        <dbReference type="ChEBI" id="CHEBI:43474"/>
        <dbReference type="ChEBI" id="CHEBI:58443"/>
        <dbReference type="ChEBI" id="CHEBI:77657"/>
        <dbReference type="ChEBI" id="CHEBI:456216"/>
        <dbReference type="EC" id="6.3.2.6"/>
    </reaction>
</comment>
<comment type="pathway">
    <text evidence="1">Purine metabolism; IMP biosynthesis via de novo pathway; 5-amino-1-(5-phospho-D-ribosyl)imidazole-4-carboxamide from 5-amino-1-(5-phospho-D-ribosyl)imidazole-4-carboxylate: step 1/2.</text>
</comment>
<comment type="similarity">
    <text evidence="1">Belongs to the SAICAR synthetase family.</text>
</comment>
<organism>
    <name type="scientific">Trichodesmium erythraeum (strain IMS101)</name>
    <dbReference type="NCBI Taxonomy" id="203124"/>
    <lineage>
        <taxon>Bacteria</taxon>
        <taxon>Bacillati</taxon>
        <taxon>Cyanobacteriota</taxon>
        <taxon>Cyanophyceae</taxon>
        <taxon>Oscillatoriophycideae</taxon>
        <taxon>Oscillatoriales</taxon>
        <taxon>Microcoleaceae</taxon>
        <taxon>Trichodesmium</taxon>
    </lineage>
</organism>